<gene>
    <name evidence="1" type="primary">dapA</name>
    <name type="ordered locus">EcolC_1198</name>
</gene>
<comment type="function">
    <text evidence="1">Catalyzes the condensation of (S)-aspartate-beta-semialdehyde [(S)-ASA] and pyruvate to 4-hydroxy-tetrahydrodipicolinate (HTPA).</text>
</comment>
<comment type="catalytic activity">
    <reaction evidence="1">
        <text>L-aspartate 4-semialdehyde + pyruvate = (2S,4S)-4-hydroxy-2,3,4,5-tetrahydrodipicolinate + H2O + H(+)</text>
        <dbReference type="Rhea" id="RHEA:34171"/>
        <dbReference type="ChEBI" id="CHEBI:15361"/>
        <dbReference type="ChEBI" id="CHEBI:15377"/>
        <dbReference type="ChEBI" id="CHEBI:15378"/>
        <dbReference type="ChEBI" id="CHEBI:67139"/>
        <dbReference type="ChEBI" id="CHEBI:537519"/>
        <dbReference type="EC" id="4.3.3.7"/>
    </reaction>
</comment>
<comment type="pathway">
    <text evidence="1">Amino-acid biosynthesis; L-lysine biosynthesis via DAP pathway; (S)-tetrahydrodipicolinate from L-aspartate: step 3/4.</text>
</comment>
<comment type="subunit">
    <text evidence="1">Homotetramer; dimer of dimers.</text>
</comment>
<comment type="subcellular location">
    <subcellularLocation>
        <location evidence="1">Cytoplasm</location>
    </subcellularLocation>
</comment>
<comment type="similarity">
    <text evidence="1">Belongs to the DapA family.</text>
</comment>
<comment type="caution">
    <text evidence="2">Was originally thought to be a dihydrodipicolinate synthase (DHDPS), catalyzing the condensation of (S)-aspartate-beta-semialdehyde [(S)-ASA] and pyruvate to dihydrodipicolinate (DHDP). However, it was shown in E.coli that the product of the enzymatic reaction is not dihydrodipicolinate but in fact (4S)-4-hydroxy-2,3,4,5-tetrahydro-(2S)-dipicolinic acid (HTPA), and that the consecutive dehydration reaction leading to DHDP is not spontaneous but catalyzed by DapB.</text>
</comment>
<feature type="chain" id="PRO_1000080530" description="4-hydroxy-tetrahydrodipicolinate synthase">
    <location>
        <begin position="1"/>
        <end position="292"/>
    </location>
</feature>
<feature type="active site" description="Proton donor/acceptor" evidence="1">
    <location>
        <position position="133"/>
    </location>
</feature>
<feature type="active site" description="Schiff-base intermediate with substrate" evidence="1">
    <location>
        <position position="161"/>
    </location>
</feature>
<feature type="binding site" evidence="1">
    <location>
        <position position="45"/>
    </location>
    <ligand>
        <name>pyruvate</name>
        <dbReference type="ChEBI" id="CHEBI:15361"/>
    </ligand>
</feature>
<feature type="binding site" evidence="1">
    <location>
        <position position="203"/>
    </location>
    <ligand>
        <name>pyruvate</name>
        <dbReference type="ChEBI" id="CHEBI:15361"/>
    </ligand>
</feature>
<feature type="site" description="Part of a proton relay during catalysis" evidence="1">
    <location>
        <position position="44"/>
    </location>
</feature>
<feature type="site" description="Part of a proton relay during catalysis" evidence="1">
    <location>
        <position position="107"/>
    </location>
</feature>
<evidence type="ECO:0000255" key="1">
    <source>
        <dbReference type="HAMAP-Rule" id="MF_00418"/>
    </source>
</evidence>
<evidence type="ECO:0000305" key="2"/>
<dbReference type="EC" id="4.3.3.7" evidence="1"/>
<dbReference type="EMBL" id="CP000946">
    <property type="protein sequence ID" value="ACA76864.1"/>
    <property type="molecule type" value="Genomic_DNA"/>
</dbReference>
<dbReference type="RefSeq" id="WP_001311023.1">
    <property type="nucleotide sequence ID" value="NZ_MTFT01000002.1"/>
</dbReference>
<dbReference type="SMR" id="B1IWI1"/>
<dbReference type="KEGG" id="ecl:EcolC_1198"/>
<dbReference type="HOGENOM" id="CLU_049343_7_1_6"/>
<dbReference type="UniPathway" id="UPA00034">
    <property type="reaction ID" value="UER00017"/>
</dbReference>
<dbReference type="GO" id="GO:0005829">
    <property type="term" value="C:cytosol"/>
    <property type="evidence" value="ECO:0007669"/>
    <property type="project" value="TreeGrafter"/>
</dbReference>
<dbReference type="GO" id="GO:0008840">
    <property type="term" value="F:4-hydroxy-tetrahydrodipicolinate synthase activity"/>
    <property type="evidence" value="ECO:0007669"/>
    <property type="project" value="UniProtKB-UniRule"/>
</dbReference>
<dbReference type="GO" id="GO:0019877">
    <property type="term" value="P:diaminopimelate biosynthetic process"/>
    <property type="evidence" value="ECO:0007669"/>
    <property type="project" value="UniProtKB-UniRule"/>
</dbReference>
<dbReference type="GO" id="GO:0009089">
    <property type="term" value="P:lysine biosynthetic process via diaminopimelate"/>
    <property type="evidence" value="ECO:0007669"/>
    <property type="project" value="UniProtKB-UniRule"/>
</dbReference>
<dbReference type="CDD" id="cd00950">
    <property type="entry name" value="DHDPS"/>
    <property type="match status" value="1"/>
</dbReference>
<dbReference type="FunFam" id="3.20.20.70:FF:000046">
    <property type="entry name" value="4-hydroxy-tetrahydrodipicolinate synthase"/>
    <property type="match status" value="1"/>
</dbReference>
<dbReference type="Gene3D" id="3.20.20.70">
    <property type="entry name" value="Aldolase class I"/>
    <property type="match status" value="1"/>
</dbReference>
<dbReference type="HAMAP" id="MF_00418">
    <property type="entry name" value="DapA"/>
    <property type="match status" value="1"/>
</dbReference>
<dbReference type="InterPro" id="IPR013785">
    <property type="entry name" value="Aldolase_TIM"/>
</dbReference>
<dbReference type="InterPro" id="IPR005263">
    <property type="entry name" value="DapA"/>
</dbReference>
<dbReference type="InterPro" id="IPR002220">
    <property type="entry name" value="DapA-like"/>
</dbReference>
<dbReference type="InterPro" id="IPR020625">
    <property type="entry name" value="Schiff_base-form_aldolases_AS"/>
</dbReference>
<dbReference type="InterPro" id="IPR020624">
    <property type="entry name" value="Schiff_base-form_aldolases_CS"/>
</dbReference>
<dbReference type="NCBIfam" id="TIGR00674">
    <property type="entry name" value="dapA"/>
    <property type="match status" value="1"/>
</dbReference>
<dbReference type="PANTHER" id="PTHR12128:SF66">
    <property type="entry name" value="4-HYDROXY-2-OXOGLUTARATE ALDOLASE, MITOCHONDRIAL"/>
    <property type="match status" value="1"/>
</dbReference>
<dbReference type="PANTHER" id="PTHR12128">
    <property type="entry name" value="DIHYDRODIPICOLINATE SYNTHASE"/>
    <property type="match status" value="1"/>
</dbReference>
<dbReference type="Pfam" id="PF00701">
    <property type="entry name" value="DHDPS"/>
    <property type="match status" value="1"/>
</dbReference>
<dbReference type="PIRSF" id="PIRSF001365">
    <property type="entry name" value="DHDPS"/>
    <property type="match status" value="1"/>
</dbReference>
<dbReference type="PRINTS" id="PR00146">
    <property type="entry name" value="DHPICSNTHASE"/>
</dbReference>
<dbReference type="SMART" id="SM01130">
    <property type="entry name" value="DHDPS"/>
    <property type="match status" value="1"/>
</dbReference>
<dbReference type="SUPFAM" id="SSF51569">
    <property type="entry name" value="Aldolase"/>
    <property type="match status" value="1"/>
</dbReference>
<dbReference type="PROSITE" id="PS00665">
    <property type="entry name" value="DHDPS_1"/>
    <property type="match status" value="1"/>
</dbReference>
<dbReference type="PROSITE" id="PS00666">
    <property type="entry name" value="DHDPS_2"/>
    <property type="match status" value="1"/>
</dbReference>
<keyword id="KW-0028">Amino-acid biosynthesis</keyword>
<keyword id="KW-0963">Cytoplasm</keyword>
<keyword id="KW-0220">Diaminopimelate biosynthesis</keyword>
<keyword id="KW-0456">Lyase</keyword>
<keyword id="KW-0457">Lysine biosynthesis</keyword>
<keyword id="KW-0704">Schiff base</keyword>
<name>DAPA_ECOLC</name>
<proteinExistence type="inferred from homology"/>
<protein>
    <recommendedName>
        <fullName evidence="1">4-hydroxy-tetrahydrodipicolinate synthase</fullName>
        <shortName evidence="1">HTPA synthase</shortName>
        <ecNumber evidence="1">4.3.3.7</ecNumber>
    </recommendedName>
</protein>
<accession>B1IWI1</accession>
<reference key="1">
    <citation type="submission" date="2008-02" db="EMBL/GenBank/DDBJ databases">
        <title>Complete sequence of Escherichia coli C str. ATCC 8739.</title>
        <authorList>
            <person name="Copeland A."/>
            <person name="Lucas S."/>
            <person name="Lapidus A."/>
            <person name="Glavina del Rio T."/>
            <person name="Dalin E."/>
            <person name="Tice H."/>
            <person name="Bruce D."/>
            <person name="Goodwin L."/>
            <person name="Pitluck S."/>
            <person name="Kiss H."/>
            <person name="Brettin T."/>
            <person name="Detter J.C."/>
            <person name="Han C."/>
            <person name="Kuske C.R."/>
            <person name="Schmutz J."/>
            <person name="Larimer F."/>
            <person name="Land M."/>
            <person name="Hauser L."/>
            <person name="Kyrpides N."/>
            <person name="Mikhailova N."/>
            <person name="Ingram L."/>
            <person name="Richardson P."/>
        </authorList>
    </citation>
    <scope>NUCLEOTIDE SEQUENCE [LARGE SCALE GENOMIC DNA]</scope>
    <source>
        <strain>ATCC 8739 / DSM 1576 / NBRC 3972 / NCIMB 8545 / WDCM 00012 / Crooks</strain>
    </source>
</reference>
<organism>
    <name type="scientific">Escherichia coli (strain ATCC 8739 / DSM 1576 / NBRC 3972 / NCIMB 8545 / WDCM 00012 / Crooks)</name>
    <dbReference type="NCBI Taxonomy" id="481805"/>
    <lineage>
        <taxon>Bacteria</taxon>
        <taxon>Pseudomonadati</taxon>
        <taxon>Pseudomonadota</taxon>
        <taxon>Gammaproteobacteria</taxon>
        <taxon>Enterobacterales</taxon>
        <taxon>Enterobacteriaceae</taxon>
        <taxon>Escherichia</taxon>
    </lineage>
</organism>
<sequence length="292" mass="31270">MFTGSIVAIVTPMDEKGNVCRASLKKLIDYHVASGTSAIVSVGTTGESATLNHDEHADVVMMTLDLADGRIPVIAGTGANATAEAISLTQRFNDSGIVGCLTVTPYYNRPSQEGLYQHFKAIAEHTDLPQILYNVPSRTGCDLLPETVGRLAKVKNIIGIKEATGNLTRVNQIKELVSDDFVLLSGDDASALDFMQLGGHGVISVTANVAARDMAQMCKLAAEGHFAEARVINQRLMPLHNKLFVEPNPIPVKWACKELGLVATDTLRLPMTPITDSGRETVRAALKHAGLL</sequence>